<protein>
    <recommendedName>
        <fullName evidence="1">Large ribosomal subunit protein bL19</fullName>
    </recommendedName>
    <alternativeName>
        <fullName evidence="2">50S ribosomal protein L19</fullName>
    </alternativeName>
</protein>
<keyword id="KW-1185">Reference proteome</keyword>
<keyword id="KW-0687">Ribonucleoprotein</keyword>
<keyword id="KW-0689">Ribosomal protein</keyword>
<comment type="function">
    <text evidence="1">This protein is located at the 30S-50S ribosomal subunit interface and may play a role in the structure and function of the aminoacyl-tRNA binding site.</text>
</comment>
<comment type="similarity">
    <text evidence="1">Belongs to the bacterial ribosomal protein bL19 family.</text>
</comment>
<feature type="chain" id="PRO_1000193833" description="Large ribosomal subunit protein bL19">
    <location>
        <begin position="1"/>
        <end position="115"/>
    </location>
</feature>
<name>RL19_ECO27</name>
<proteinExistence type="inferred from homology"/>
<organism>
    <name type="scientific">Escherichia coli O127:H6 (strain E2348/69 / EPEC)</name>
    <dbReference type="NCBI Taxonomy" id="574521"/>
    <lineage>
        <taxon>Bacteria</taxon>
        <taxon>Pseudomonadati</taxon>
        <taxon>Pseudomonadota</taxon>
        <taxon>Gammaproteobacteria</taxon>
        <taxon>Enterobacterales</taxon>
        <taxon>Enterobacteriaceae</taxon>
        <taxon>Escherichia</taxon>
    </lineage>
</organism>
<accession>B7UH55</accession>
<dbReference type="EMBL" id="FM180568">
    <property type="protein sequence ID" value="CAS10443.1"/>
    <property type="molecule type" value="Genomic_DNA"/>
</dbReference>
<dbReference type="RefSeq" id="WP_000065253.1">
    <property type="nucleotide sequence ID" value="NC_011601.1"/>
</dbReference>
<dbReference type="SMR" id="B7UH55"/>
<dbReference type="GeneID" id="93774456"/>
<dbReference type="KEGG" id="ecg:E2348C_2895"/>
<dbReference type="HOGENOM" id="CLU_103507_2_1_6"/>
<dbReference type="Proteomes" id="UP000008205">
    <property type="component" value="Chromosome"/>
</dbReference>
<dbReference type="GO" id="GO:0022625">
    <property type="term" value="C:cytosolic large ribosomal subunit"/>
    <property type="evidence" value="ECO:0007669"/>
    <property type="project" value="TreeGrafter"/>
</dbReference>
<dbReference type="GO" id="GO:0003735">
    <property type="term" value="F:structural constituent of ribosome"/>
    <property type="evidence" value="ECO:0007669"/>
    <property type="project" value="InterPro"/>
</dbReference>
<dbReference type="GO" id="GO:0006412">
    <property type="term" value="P:translation"/>
    <property type="evidence" value="ECO:0007669"/>
    <property type="project" value="UniProtKB-UniRule"/>
</dbReference>
<dbReference type="FunFam" id="2.30.30.790:FF:000001">
    <property type="entry name" value="50S ribosomal protein L19"/>
    <property type="match status" value="1"/>
</dbReference>
<dbReference type="Gene3D" id="2.30.30.790">
    <property type="match status" value="1"/>
</dbReference>
<dbReference type="HAMAP" id="MF_00402">
    <property type="entry name" value="Ribosomal_bL19"/>
    <property type="match status" value="1"/>
</dbReference>
<dbReference type="InterPro" id="IPR001857">
    <property type="entry name" value="Ribosomal_bL19"/>
</dbReference>
<dbReference type="InterPro" id="IPR018257">
    <property type="entry name" value="Ribosomal_bL19_CS"/>
</dbReference>
<dbReference type="InterPro" id="IPR038657">
    <property type="entry name" value="Ribosomal_bL19_sf"/>
</dbReference>
<dbReference type="InterPro" id="IPR008991">
    <property type="entry name" value="Translation_prot_SH3-like_sf"/>
</dbReference>
<dbReference type="NCBIfam" id="TIGR01024">
    <property type="entry name" value="rplS_bact"/>
    <property type="match status" value="1"/>
</dbReference>
<dbReference type="PANTHER" id="PTHR15680:SF9">
    <property type="entry name" value="LARGE RIBOSOMAL SUBUNIT PROTEIN BL19M"/>
    <property type="match status" value="1"/>
</dbReference>
<dbReference type="PANTHER" id="PTHR15680">
    <property type="entry name" value="RIBOSOMAL PROTEIN L19"/>
    <property type="match status" value="1"/>
</dbReference>
<dbReference type="Pfam" id="PF01245">
    <property type="entry name" value="Ribosomal_L19"/>
    <property type="match status" value="1"/>
</dbReference>
<dbReference type="PIRSF" id="PIRSF002191">
    <property type="entry name" value="Ribosomal_L19"/>
    <property type="match status" value="1"/>
</dbReference>
<dbReference type="PRINTS" id="PR00061">
    <property type="entry name" value="RIBOSOMALL19"/>
</dbReference>
<dbReference type="SUPFAM" id="SSF50104">
    <property type="entry name" value="Translation proteins SH3-like domain"/>
    <property type="match status" value="1"/>
</dbReference>
<dbReference type="PROSITE" id="PS01015">
    <property type="entry name" value="RIBOSOMAL_L19"/>
    <property type="match status" value="1"/>
</dbReference>
<gene>
    <name evidence="1" type="primary">rplS</name>
    <name type="ordered locus">E2348C_2895</name>
</gene>
<reference key="1">
    <citation type="journal article" date="2009" name="J. Bacteriol.">
        <title>Complete genome sequence and comparative genome analysis of enteropathogenic Escherichia coli O127:H6 strain E2348/69.</title>
        <authorList>
            <person name="Iguchi A."/>
            <person name="Thomson N.R."/>
            <person name="Ogura Y."/>
            <person name="Saunders D."/>
            <person name="Ooka T."/>
            <person name="Henderson I.R."/>
            <person name="Harris D."/>
            <person name="Asadulghani M."/>
            <person name="Kurokawa K."/>
            <person name="Dean P."/>
            <person name="Kenny B."/>
            <person name="Quail M.A."/>
            <person name="Thurston S."/>
            <person name="Dougan G."/>
            <person name="Hayashi T."/>
            <person name="Parkhill J."/>
            <person name="Frankel G."/>
        </authorList>
    </citation>
    <scope>NUCLEOTIDE SEQUENCE [LARGE SCALE GENOMIC DNA]</scope>
    <source>
        <strain>E2348/69 / EPEC</strain>
    </source>
</reference>
<evidence type="ECO:0000255" key="1">
    <source>
        <dbReference type="HAMAP-Rule" id="MF_00402"/>
    </source>
</evidence>
<evidence type="ECO:0000305" key="2"/>
<sequence length="115" mass="13133">MSNIIKQLEQEQMKQDVPSFRPGDTVEVKVWVVEGSKKRLQAFEGVVIAIRNRGLHSAFTVRKISNGEGVERVFQTHSPVVDSISVKRRGAVRKAKLYYLRERTGKAARIKERLN</sequence>